<evidence type="ECO:0000250" key="1"/>
<evidence type="ECO:0000255" key="2">
    <source>
        <dbReference type="PROSITE-ProRule" id="PRU00387"/>
    </source>
</evidence>
<gene>
    <name type="primary">hlyX</name>
</gene>
<protein>
    <recommendedName>
        <fullName>Regulatory protein HlyX</fullName>
    </recommendedName>
</protein>
<accession>P23619</accession>
<name>HLYX_ACTPL</name>
<feature type="chain" id="PRO_0000100181" description="Regulatory protein HlyX">
    <location>
        <begin position="1"/>
        <end position="240"/>
    </location>
</feature>
<feature type="domain" description="HTH crp-type" evidence="2">
    <location>
        <begin position="163"/>
        <end position="236"/>
    </location>
</feature>
<feature type="DNA-binding region" description="H-T-H motif" evidence="2">
    <location>
        <begin position="196"/>
        <end position="215"/>
    </location>
</feature>
<feature type="region of interest" description="Essential for the oxygen-regulated activity" evidence="1">
    <location>
        <begin position="15"/>
        <end position="28"/>
    </location>
</feature>
<organism>
    <name type="scientific">Actinobacillus pleuropneumoniae</name>
    <name type="common">Haemophilus pleuropneumoniae</name>
    <dbReference type="NCBI Taxonomy" id="715"/>
    <lineage>
        <taxon>Bacteria</taxon>
        <taxon>Pseudomonadati</taxon>
        <taxon>Pseudomonadota</taxon>
        <taxon>Gammaproteobacteria</taxon>
        <taxon>Pasteurellales</taxon>
        <taxon>Pasteurellaceae</taxon>
        <taxon>Actinobacillus</taxon>
    </lineage>
</organism>
<comment type="function">
    <text>Confers a hemolytic phenotype on E.coli. May regulate, rather than mediate, hemolytic activity.</text>
</comment>
<comment type="subcellular location">
    <subcellularLocation>
        <location>Cytoplasm</location>
    </subcellularLocation>
</comment>
<comment type="miscellaneous">
    <text>Possesses 4 cysteines which may bind a metal ion (possibly iron).</text>
</comment>
<proteinExistence type="predicted"/>
<sequence>MKIVSDAKHTGRTRCTIHCQNCSISQLCLPFTLSEHELTQLDNIIERKKPVQKSQIIFQSGDELRSIYAIRSGTIKSYTISESGEEQITAFHLPGDLVGFDAIMNMKHVGFAQALETSMICEIPFDILDDLAGKMPKIRHQIMRLMSNEIKSDQEMILLLSKMSAEEKLAAFLHNLSQRYAAPGFSAREFRLTMTRGDIGNYLGLTIETISRLLGRFQKSGMITVQGKYITINRMDELTV</sequence>
<reference key="1">
    <citation type="journal article" date="1990" name="J. Bacteriol.">
        <title>Actinobacillus pleuropneumoniae hlyX gene homology with the fnr gene of Escherichia coli.</title>
        <authorList>
            <person name="Macinnes J.I."/>
            <person name="Kim J.E."/>
            <person name="Lian C.J."/>
            <person name="Soltes G.A."/>
        </authorList>
    </citation>
    <scope>NUCLEOTIDE SEQUENCE [GENOMIC DNA]</scope>
</reference>
<keyword id="KW-0010">Activator</keyword>
<keyword id="KW-0204">Cytolysis</keyword>
<keyword id="KW-0963">Cytoplasm</keyword>
<keyword id="KW-0238">DNA-binding</keyword>
<keyword id="KW-0354">Hemolysis</keyword>
<keyword id="KW-0804">Transcription</keyword>
<keyword id="KW-0805">Transcription regulation</keyword>
<dbReference type="EMBL" id="M80712">
    <property type="protein sequence ID" value="AAA21920.1"/>
    <property type="molecule type" value="Genomic_DNA"/>
</dbReference>
<dbReference type="PIR" id="A37769">
    <property type="entry name" value="A37769"/>
</dbReference>
<dbReference type="SMR" id="P23619"/>
<dbReference type="GO" id="GO:0005829">
    <property type="term" value="C:cytosol"/>
    <property type="evidence" value="ECO:0007669"/>
    <property type="project" value="TreeGrafter"/>
</dbReference>
<dbReference type="GO" id="GO:0003677">
    <property type="term" value="F:DNA binding"/>
    <property type="evidence" value="ECO:0007669"/>
    <property type="project" value="UniProtKB-KW"/>
</dbReference>
<dbReference type="GO" id="GO:0003700">
    <property type="term" value="F:DNA-binding transcription factor activity"/>
    <property type="evidence" value="ECO:0007669"/>
    <property type="project" value="InterPro"/>
</dbReference>
<dbReference type="GO" id="GO:0031640">
    <property type="term" value="P:killing of cells of another organism"/>
    <property type="evidence" value="ECO:0007669"/>
    <property type="project" value="UniProtKB-KW"/>
</dbReference>
<dbReference type="CDD" id="cd00038">
    <property type="entry name" value="CAP_ED"/>
    <property type="match status" value="1"/>
</dbReference>
<dbReference type="CDD" id="cd00092">
    <property type="entry name" value="HTH_CRP"/>
    <property type="match status" value="1"/>
</dbReference>
<dbReference type="FunFam" id="1.10.10.10:FF:000028">
    <property type="entry name" value="Fumarate/nitrate reduction transcriptional regulator Fnr"/>
    <property type="match status" value="1"/>
</dbReference>
<dbReference type="FunFam" id="2.60.120.10:FF:000004">
    <property type="entry name" value="Fumarate/nitrate reduction transcriptional regulator Fnr"/>
    <property type="match status" value="1"/>
</dbReference>
<dbReference type="Gene3D" id="2.60.120.10">
    <property type="entry name" value="Jelly Rolls"/>
    <property type="match status" value="1"/>
</dbReference>
<dbReference type="Gene3D" id="1.10.10.10">
    <property type="entry name" value="Winged helix-like DNA-binding domain superfamily/Winged helix DNA-binding domain"/>
    <property type="match status" value="1"/>
</dbReference>
<dbReference type="InterPro" id="IPR000595">
    <property type="entry name" value="cNMP-bd_dom"/>
</dbReference>
<dbReference type="InterPro" id="IPR018490">
    <property type="entry name" value="cNMP-bd_dom_sf"/>
</dbReference>
<dbReference type="InterPro" id="IPR050397">
    <property type="entry name" value="Env_Response_Regulators"/>
</dbReference>
<dbReference type="InterPro" id="IPR012318">
    <property type="entry name" value="HTH_CRP"/>
</dbReference>
<dbReference type="InterPro" id="IPR014710">
    <property type="entry name" value="RmlC-like_jellyroll"/>
</dbReference>
<dbReference type="InterPro" id="IPR018335">
    <property type="entry name" value="Tscrpt_reg_HTH_Crp-type_CS"/>
</dbReference>
<dbReference type="InterPro" id="IPR036388">
    <property type="entry name" value="WH-like_DNA-bd_sf"/>
</dbReference>
<dbReference type="InterPro" id="IPR036390">
    <property type="entry name" value="WH_DNA-bd_sf"/>
</dbReference>
<dbReference type="NCBIfam" id="NF008365">
    <property type="entry name" value="PRK11161.1"/>
    <property type="match status" value="1"/>
</dbReference>
<dbReference type="PANTHER" id="PTHR24567">
    <property type="entry name" value="CRP FAMILY TRANSCRIPTIONAL REGULATORY PROTEIN"/>
    <property type="match status" value="1"/>
</dbReference>
<dbReference type="PANTHER" id="PTHR24567:SF75">
    <property type="entry name" value="FUMARATE AND NITRATE REDUCTION REGULATORY PROTEIN"/>
    <property type="match status" value="1"/>
</dbReference>
<dbReference type="Pfam" id="PF00027">
    <property type="entry name" value="cNMP_binding"/>
    <property type="match status" value="1"/>
</dbReference>
<dbReference type="Pfam" id="PF00325">
    <property type="entry name" value="Crp"/>
    <property type="match status" value="1"/>
</dbReference>
<dbReference type="PRINTS" id="PR00034">
    <property type="entry name" value="HTHCRP"/>
</dbReference>
<dbReference type="SMART" id="SM00100">
    <property type="entry name" value="cNMP"/>
    <property type="match status" value="1"/>
</dbReference>
<dbReference type="SMART" id="SM00419">
    <property type="entry name" value="HTH_CRP"/>
    <property type="match status" value="1"/>
</dbReference>
<dbReference type="SUPFAM" id="SSF51206">
    <property type="entry name" value="cAMP-binding domain-like"/>
    <property type="match status" value="1"/>
</dbReference>
<dbReference type="SUPFAM" id="SSF46785">
    <property type="entry name" value="Winged helix' DNA-binding domain"/>
    <property type="match status" value="1"/>
</dbReference>
<dbReference type="PROSITE" id="PS50042">
    <property type="entry name" value="CNMP_BINDING_3"/>
    <property type="match status" value="1"/>
</dbReference>
<dbReference type="PROSITE" id="PS00042">
    <property type="entry name" value="HTH_CRP_1"/>
    <property type="match status" value="1"/>
</dbReference>
<dbReference type="PROSITE" id="PS51063">
    <property type="entry name" value="HTH_CRP_2"/>
    <property type="match status" value="1"/>
</dbReference>